<accession>O42632</accession>
<name>KPC1_COCHE</name>
<protein>
    <recommendedName>
        <fullName>Protein kinase C-like</fullName>
        <ecNumber>2.7.11.13</ecNumber>
    </recommendedName>
</protein>
<evidence type="ECO:0000255" key="1">
    <source>
        <dbReference type="PROSITE-ProRule" id="PRU00041"/>
    </source>
</evidence>
<evidence type="ECO:0000255" key="2">
    <source>
        <dbReference type="PROSITE-ProRule" id="PRU00159"/>
    </source>
</evidence>
<evidence type="ECO:0000255" key="3">
    <source>
        <dbReference type="PROSITE-ProRule" id="PRU00226"/>
    </source>
</evidence>
<evidence type="ECO:0000255" key="4">
    <source>
        <dbReference type="PROSITE-ProRule" id="PRU00618"/>
    </source>
</evidence>
<evidence type="ECO:0000255" key="5">
    <source>
        <dbReference type="PROSITE-ProRule" id="PRU01207"/>
    </source>
</evidence>
<evidence type="ECO:0000255" key="6">
    <source>
        <dbReference type="PROSITE-ProRule" id="PRU10027"/>
    </source>
</evidence>
<evidence type="ECO:0000256" key="7">
    <source>
        <dbReference type="SAM" id="MobiDB-lite"/>
    </source>
</evidence>
<evidence type="ECO:0000305" key="8"/>
<gene>
    <name type="primary">PKC1</name>
</gene>
<keyword id="KW-0067">ATP-binding</keyword>
<keyword id="KW-0175">Coiled coil</keyword>
<keyword id="KW-0418">Kinase</keyword>
<keyword id="KW-0479">Metal-binding</keyword>
<keyword id="KW-0547">Nucleotide-binding</keyword>
<keyword id="KW-0597">Phosphoprotein</keyword>
<keyword id="KW-0677">Repeat</keyword>
<keyword id="KW-0723">Serine/threonine-protein kinase</keyword>
<keyword id="KW-0808">Transferase</keyword>
<keyword id="KW-0862">Zinc</keyword>
<keyword id="KW-0863">Zinc-finger</keyword>
<comment type="catalytic activity">
    <reaction>
        <text>L-seryl-[protein] + ATP = O-phospho-L-seryl-[protein] + ADP + H(+)</text>
        <dbReference type="Rhea" id="RHEA:17989"/>
        <dbReference type="Rhea" id="RHEA-COMP:9863"/>
        <dbReference type="Rhea" id="RHEA-COMP:11604"/>
        <dbReference type="ChEBI" id="CHEBI:15378"/>
        <dbReference type="ChEBI" id="CHEBI:29999"/>
        <dbReference type="ChEBI" id="CHEBI:30616"/>
        <dbReference type="ChEBI" id="CHEBI:83421"/>
        <dbReference type="ChEBI" id="CHEBI:456216"/>
        <dbReference type="EC" id="2.7.11.13"/>
    </reaction>
</comment>
<comment type="catalytic activity">
    <reaction>
        <text>L-threonyl-[protein] + ATP = O-phospho-L-threonyl-[protein] + ADP + H(+)</text>
        <dbReference type="Rhea" id="RHEA:46608"/>
        <dbReference type="Rhea" id="RHEA-COMP:11060"/>
        <dbReference type="Rhea" id="RHEA-COMP:11605"/>
        <dbReference type="ChEBI" id="CHEBI:15378"/>
        <dbReference type="ChEBI" id="CHEBI:30013"/>
        <dbReference type="ChEBI" id="CHEBI:30616"/>
        <dbReference type="ChEBI" id="CHEBI:61977"/>
        <dbReference type="ChEBI" id="CHEBI:456216"/>
        <dbReference type="EC" id="2.7.11.13"/>
    </reaction>
</comment>
<comment type="similarity">
    <text evidence="8">Belongs to the protein kinase superfamily. AGC Ser/Thr protein kinase family. PKC subfamily.</text>
</comment>
<sequence length="1174" mass="130506">MANVEETVANVQRKIDREKALINAANAMRQSTNNPAVLSRLDGQIKDGRRNIDYFESKLRDLDLQRTTSGVDNMSLQPGRSPTNPLTPPPKDNWDGYAQQDQGGYGGPQSQYSQLSGGEALQPPRAPFAAPPPATANKRPNYSKLDLIKYDTPHLGPRIQLMLTQLEFKLSVEKQYKDGIEKMVRLYQMEGDRKSKQDAEAKRIESNQKIQLLKHSLKRYEDLHVDIDGDGDDNDSLDIPSQRKPLSGQLSLRIHAVADVDHAATGRFSRGPETFVNIKVEDTIKGRTKPTRNDRWTDEVHDFSIDKANEIEITVYDKTGDHLLPIGMLWVRISDIAEEMRRKKLETELANSGWVAADKMGGHTGIQPDMQFQPPPGQSPAGGPGGGPTPAGVRPPGAPQPQTGPIMIDDWFSLEPVGRIHLTMSFIKNTGNKQPFDLGLGRKGAVRQRKEDVVEQYGHKFVQQQFYNVMRCALCAEFLKYAAGMQCSDCNYTCHKKCYPKVVTKCITQSNAETDPDEAKLNHRIPHRFENFSNMGANWCCHCGYVLPLGRKQTKKCNECGLTCHAHCVHFVPDFCGMSMEVANQILMEIKRTRRGQSSSGPGMSQRTLRPQSAAKPLPPTQPQSPGQPGQESPTQSDRYSYGKEQMSPPPGPPRQPSYPSSATSVDAARASYSTTGTASTGAPTSPTSGSRPPSGPRTQSSVAAAAAAMNKATQPGYGRSNTDYSPQSGRSSGSGYPTEQRMSQQQAPQPAAYDPSVYANIPSYPPSHQQPAPVPSYPTKSSYPLPQPPPPQSPPQHPQQPTPSQQKMPEQQALTQQPPSAVGEVPGKKVTPAANTQGTGKRIGLDHFNFLAVLGKGNFGKVMLAETKTTKQLYAIKVLKKEFIIENDEVESTRSEKRVFLIANKERHPFLLNLHACFQTETRVYFVMEYISGGDLMLHIQRGQFGTKRAQFYAAEVCLALKYFHENGVIYRDLKLDNIMLTLDGHIKVADYGLCKEEMWYGSTTSTFCGTPEFMAPEILLDKKYGRAVDWWAFGVLIYQMLLQQSPFRGEDEDEIYDAILADEPLYPIHMPRDSVSILQKLLTREPEMRLGSGPTDAQEIMSHAFFRNINWDDIYHKRVQPPFIPQITSPTDTSNFDTEFTSVTPVLTPVQSVLSQAMQEEFRGFSYSADFA</sequence>
<feature type="chain" id="PRO_0000055743" description="Protein kinase C-like">
    <location>
        <begin position="1"/>
        <end position="1174"/>
    </location>
</feature>
<feature type="domain" description="REM-1 1" evidence="5">
    <location>
        <begin position="1"/>
        <end position="68"/>
    </location>
</feature>
<feature type="domain" description="REM-1 2" evidence="5">
    <location>
        <begin position="149"/>
        <end position="226"/>
    </location>
</feature>
<feature type="domain" description="C2" evidence="1">
    <location>
        <begin position="229"/>
        <end position="349"/>
    </location>
</feature>
<feature type="domain" description="Protein kinase" evidence="2">
    <location>
        <begin position="849"/>
        <end position="1108"/>
    </location>
</feature>
<feature type="domain" description="AGC-kinase C-terminal" evidence="4">
    <location>
        <begin position="1109"/>
        <end position="1174"/>
    </location>
</feature>
<feature type="zinc finger region" description="Phorbol-ester/DAG-type 1" evidence="3">
    <location>
        <begin position="458"/>
        <end position="506"/>
    </location>
</feature>
<feature type="zinc finger region" description="Phorbol-ester/DAG-type 2" evidence="3">
    <location>
        <begin position="526"/>
        <end position="576"/>
    </location>
</feature>
<feature type="region of interest" description="Disordered" evidence="7">
    <location>
        <begin position="69"/>
        <end position="140"/>
    </location>
</feature>
<feature type="region of interest" description="Disordered" evidence="7">
    <location>
        <begin position="358"/>
        <end position="406"/>
    </location>
</feature>
<feature type="region of interest" description="Disordered" evidence="7">
    <location>
        <begin position="593"/>
        <end position="842"/>
    </location>
</feature>
<feature type="compositionally biased region" description="Polar residues" evidence="7">
    <location>
        <begin position="69"/>
        <end position="84"/>
    </location>
</feature>
<feature type="compositionally biased region" description="Low complexity" evidence="7">
    <location>
        <begin position="96"/>
        <end position="123"/>
    </location>
</feature>
<feature type="compositionally biased region" description="Pro residues" evidence="7">
    <location>
        <begin position="124"/>
        <end position="134"/>
    </location>
</feature>
<feature type="compositionally biased region" description="Gly residues" evidence="7">
    <location>
        <begin position="380"/>
        <end position="389"/>
    </location>
</feature>
<feature type="compositionally biased region" description="Polar residues" evidence="7">
    <location>
        <begin position="596"/>
        <end position="611"/>
    </location>
</feature>
<feature type="compositionally biased region" description="Low complexity" evidence="7">
    <location>
        <begin position="624"/>
        <end position="636"/>
    </location>
</feature>
<feature type="compositionally biased region" description="Pro residues" evidence="7">
    <location>
        <begin position="648"/>
        <end position="657"/>
    </location>
</feature>
<feature type="compositionally biased region" description="Low complexity" evidence="7">
    <location>
        <begin position="658"/>
        <end position="709"/>
    </location>
</feature>
<feature type="compositionally biased region" description="Polar residues" evidence="7">
    <location>
        <begin position="720"/>
        <end position="744"/>
    </location>
</feature>
<feature type="compositionally biased region" description="Pro residues" evidence="7">
    <location>
        <begin position="786"/>
        <end position="802"/>
    </location>
</feature>
<feature type="compositionally biased region" description="Polar residues" evidence="7">
    <location>
        <begin position="808"/>
        <end position="820"/>
    </location>
</feature>
<feature type="active site" description="Proton acceptor" evidence="2 6">
    <location>
        <position position="974"/>
    </location>
</feature>
<feature type="binding site" evidence="2">
    <location>
        <begin position="855"/>
        <end position="863"/>
    </location>
    <ligand>
        <name>ATP</name>
        <dbReference type="ChEBI" id="CHEBI:30616"/>
    </ligand>
</feature>
<feature type="binding site" evidence="2">
    <location>
        <position position="878"/>
    </location>
    <ligand>
        <name>ATP</name>
        <dbReference type="ChEBI" id="CHEBI:30616"/>
    </ligand>
</feature>
<reference key="1">
    <citation type="journal article" date="1998" name="FEMS Microbiol. Lett.">
        <title>PKC1, encoding a protein kinase C, and FAT1, encoding a fatty acid transporter protein, are neighbors in Cochliobolus heterostrophus.</title>
        <authorList>
            <person name="Oeser B."/>
        </authorList>
    </citation>
    <scope>NUCLEOTIDE SEQUENCE [GENOMIC DNA]</scope>
    <source>
        <strain>ATCC 48329 / C2</strain>
    </source>
</reference>
<dbReference type="EC" id="2.7.11.13"/>
<dbReference type="EMBL" id="Y15839">
    <property type="protein sequence ID" value="CAA75801.1"/>
    <property type="molecule type" value="Genomic_DNA"/>
</dbReference>
<dbReference type="PIR" id="T43051">
    <property type="entry name" value="T43051"/>
</dbReference>
<dbReference type="SMR" id="O42632"/>
<dbReference type="GO" id="GO:0005524">
    <property type="term" value="F:ATP binding"/>
    <property type="evidence" value="ECO:0007669"/>
    <property type="project" value="UniProtKB-KW"/>
</dbReference>
<dbReference type="GO" id="GO:0004697">
    <property type="term" value="F:diacylglycerol-dependent serine/threonine kinase activity"/>
    <property type="evidence" value="ECO:0007669"/>
    <property type="project" value="UniProtKB-EC"/>
</dbReference>
<dbReference type="GO" id="GO:0106310">
    <property type="term" value="F:protein serine kinase activity"/>
    <property type="evidence" value="ECO:0007669"/>
    <property type="project" value="RHEA"/>
</dbReference>
<dbReference type="GO" id="GO:0008270">
    <property type="term" value="F:zinc ion binding"/>
    <property type="evidence" value="ECO:0007669"/>
    <property type="project" value="UniProtKB-KW"/>
</dbReference>
<dbReference type="GO" id="GO:0009272">
    <property type="term" value="P:fungal-type cell wall biogenesis"/>
    <property type="evidence" value="ECO:0007669"/>
    <property type="project" value="InterPro"/>
</dbReference>
<dbReference type="GO" id="GO:0007165">
    <property type="term" value="P:signal transduction"/>
    <property type="evidence" value="ECO:0007669"/>
    <property type="project" value="InterPro"/>
</dbReference>
<dbReference type="CDD" id="cd20822">
    <property type="entry name" value="C1_ScPKC1-like_rpt1"/>
    <property type="match status" value="1"/>
</dbReference>
<dbReference type="CDD" id="cd20823">
    <property type="entry name" value="C1_ScPKC1-like_rpt2"/>
    <property type="match status" value="1"/>
</dbReference>
<dbReference type="CDD" id="cd08689">
    <property type="entry name" value="C2_fungal_Pkc1p"/>
    <property type="match status" value="1"/>
</dbReference>
<dbReference type="CDD" id="cd11620">
    <property type="entry name" value="HR1_PKC-like_2_fungi"/>
    <property type="match status" value="1"/>
</dbReference>
<dbReference type="CDD" id="cd05570">
    <property type="entry name" value="STKc_PKC"/>
    <property type="match status" value="1"/>
</dbReference>
<dbReference type="FunFam" id="1.10.287.160:FF:000004">
    <property type="entry name" value="Protein kinase C"/>
    <property type="match status" value="1"/>
</dbReference>
<dbReference type="FunFam" id="1.10.510.10:FF:000101">
    <property type="entry name" value="Protein kinase C"/>
    <property type="match status" value="1"/>
</dbReference>
<dbReference type="FunFam" id="3.30.200.20:FF:000103">
    <property type="entry name" value="Protein kinase C"/>
    <property type="match status" value="1"/>
</dbReference>
<dbReference type="FunFam" id="3.30.60.20:FF:000014">
    <property type="entry name" value="Protein kinase C"/>
    <property type="match status" value="1"/>
</dbReference>
<dbReference type="FunFam" id="3.30.60.20:FF:000034">
    <property type="entry name" value="Protein kinase C"/>
    <property type="match status" value="1"/>
</dbReference>
<dbReference type="Gene3D" id="3.30.60.20">
    <property type="match status" value="2"/>
</dbReference>
<dbReference type="Gene3D" id="1.10.287.160">
    <property type="entry name" value="HR1 repeat"/>
    <property type="match status" value="1"/>
</dbReference>
<dbReference type="Gene3D" id="3.30.200.20">
    <property type="entry name" value="Phosphorylase Kinase, domain 1"/>
    <property type="match status" value="1"/>
</dbReference>
<dbReference type="Gene3D" id="1.10.510.10">
    <property type="entry name" value="Transferase(Phosphotransferase) domain 1"/>
    <property type="match status" value="1"/>
</dbReference>
<dbReference type="InterPro" id="IPR000961">
    <property type="entry name" value="AGC-kinase_C"/>
</dbReference>
<dbReference type="InterPro" id="IPR046349">
    <property type="entry name" value="C1-like_sf"/>
</dbReference>
<dbReference type="InterPro" id="IPR000008">
    <property type="entry name" value="C2_dom"/>
</dbReference>
<dbReference type="InterPro" id="IPR035892">
    <property type="entry name" value="C2_domain_sf"/>
</dbReference>
<dbReference type="InterPro" id="IPR037778">
    <property type="entry name" value="C2_fungal_PKC"/>
</dbReference>
<dbReference type="InterPro" id="IPR011072">
    <property type="entry name" value="HR1_rho-bd"/>
</dbReference>
<dbReference type="InterPro" id="IPR036274">
    <property type="entry name" value="HR1_rpt_sf"/>
</dbReference>
<dbReference type="InterPro" id="IPR011009">
    <property type="entry name" value="Kinase-like_dom_sf"/>
</dbReference>
<dbReference type="InterPro" id="IPR002219">
    <property type="entry name" value="PE/DAG-bd"/>
</dbReference>
<dbReference type="InterPro" id="IPR037312">
    <property type="entry name" value="PKC-like_HR1"/>
</dbReference>
<dbReference type="InterPro" id="IPR017892">
    <property type="entry name" value="Pkinase_C"/>
</dbReference>
<dbReference type="InterPro" id="IPR000719">
    <property type="entry name" value="Prot_kinase_dom"/>
</dbReference>
<dbReference type="InterPro" id="IPR017441">
    <property type="entry name" value="Protein_kinase_ATP_BS"/>
</dbReference>
<dbReference type="InterPro" id="IPR008271">
    <property type="entry name" value="Ser/Thr_kinase_AS"/>
</dbReference>
<dbReference type="PANTHER" id="PTHR24351">
    <property type="entry name" value="RIBOSOMAL PROTEIN S6 KINASE"/>
    <property type="match status" value="1"/>
</dbReference>
<dbReference type="Pfam" id="PF00130">
    <property type="entry name" value="C1_1"/>
    <property type="match status" value="2"/>
</dbReference>
<dbReference type="Pfam" id="PF02185">
    <property type="entry name" value="HR1"/>
    <property type="match status" value="2"/>
</dbReference>
<dbReference type="Pfam" id="PF00069">
    <property type="entry name" value="Pkinase"/>
    <property type="match status" value="1"/>
</dbReference>
<dbReference type="Pfam" id="PF00433">
    <property type="entry name" value="Pkinase_C"/>
    <property type="match status" value="1"/>
</dbReference>
<dbReference type="SMART" id="SM00109">
    <property type="entry name" value="C1"/>
    <property type="match status" value="2"/>
</dbReference>
<dbReference type="SMART" id="SM00239">
    <property type="entry name" value="C2"/>
    <property type="match status" value="1"/>
</dbReference>
<dbReference type="SMART" id="SM00742">
    <property type="entry name" value="Hr1"/>
    <property type="match status" value="2"/>
</dbReference>
<dbReference type="SMART" id="SM00133">
    <property type="entry name" value="S_TK_X"/>
    <property type="match status" value="1"/>
</dbReference>
<dbReference type="SMART" id="SM00220">
    <property type="entry name" value="S_TKc"/>
    <property type="match status" value="1"/>
</dbReference>
<dbReference type="SUPFAM" id="SSF49562">
    <property type="entry name" value="C2 domain (Calcium/lipid-binding domain, CaLB)"/>
    <property type="match status" value="1"/>
</dbReference>
<dbReference type="SUPFAM" id="SSF57889">
    <property type="entry name" value="Cysteine-rich domain"/>
    <property type="match status" value="2"/>
</dbReference>
<dbReference type="SUPFAM" id="SSF46585">
    <property type="entry name" value="HR1 repeat"/>
    <property type="match status" value="1"/>
</dbReference>
<dbReference type="SUPFAM" id="SSF56112">
    <property type="entry name" value="Protein kinase-like (PK-like)"/>
    <property type="match status" value="1"/>
</dbReference>
<dbReference type="PROSITE" id="PS51285">
    <property type="entry name" value="AGC_KINASE_CTER"/>
    <property type="match status" value="1"/>
</dbReference>
<dbReference type="PROSITE" id="PS50004">
    <property type="entry name" value="C2"/>
    <property type="match status" value="1"/>
</dbReference>
<dbReference type="PROSITE" id="PS00107">
    <property type="entry name" value="PROTEIN_KINASE_ATP"/>
    <property type="match status" value="1"/>
</dbReference>
<dbReference type="PROSITE" id="PS50011">
    <property type="entry name" value="PROTEIN_KINASE_DOM"/>
    <property type="match status" value="1"/>
</dbReference>
<dbReference type="PROSITE" id="PS00108">
    <property type="entry name" value="PROTEIN_KINASE_ST"/>
    <property type="match status" value="1"/>
</dbReference>
<dbReference type="PROSITE" id="PS51860">
    <property type="entry name" value="REM_1"/>
    <property type="match status" value="2"/>
</dbReference>
<dbReference type="PROSITE" id="PS00479">
    <property type="entry name" value="ZF_DAG_PE_1"/>
    <property type="match status" value="2"/>
</dbReference>
<dbReference type="PROSITE" id="PS50081">
    <property type="entry name" value="ZF_DAG_PE_2"/>
    <property type="match status" value="2"/>
</dbReference>
<proteinExistence type="inferred from homology"/>
<organism>
    <name type="scientific">Cochliobolus heterostrophus</name>
    <name type="common">Southern corn leaf blight fungus</name>
    <name type="synonym">Bipolaris maydis</name>
    <dbReference type="NCBI Taxonomy" id="5016"/>
    <lineage>
        <taxon>Eukaryota</taxon>
        <taxon>Fungi</taxon>
        <taxon>Dikarya</taxon>
        <taxon>Ascomycota</taxon>
        <taxon>Pezizomycotina</taxon>
        <taxon>Dothideomycetes</taxon>
        <taxon>Pleosporomycetidae</taxon>
        <taxon>Pleosporales</taxon>
        <taxon>Pleosporineae</taxon>
        <taxon>Pleosporaceae</taxon>
        <taxon>Bipolaris</taxon>
    </lineage>
</organism>